<comment type="function">
    <text evidence="1">Regulates secA expression by translational coupling of the secM secA operon. Translational pausing at a specific Pro residue 5 residues before the end of the protein may allow disruption of a mRNA repressor helix that normally suppresses secA translation initiation.</text>
</comment>
<comment type="subcellular location">
    <subcellularLocation>
        <location evidence="1">Cytoplasm</location>
        <location evidence="1">Cytosol</location>
    </subcellularLocation>
    <subcellularLocation>
        <location evidence="1">Periplasm</location>
    </subcellularLocation>
    <text evidence="1">The active form is cytosolic, while the periplasmic form is rapidly degraded, mainly by the tail-specific protease.</text>
</comment>
<comment type="similarity">
    <text evidence="1">Belongs to the SecM family.</text>
</comment>
<name>SECM_PECAS</name>
<reference key="1">
    <citation type="journal article" date="2004" name="Proc. Natl. Acad. Sci. U.S.A.">
        <title>Genome sequence of the enterobacterial phytopathogen Erwinia carotovora subsp. atroseptica and characterization of virulence factors.</title>
        <authorList>
            <person name="Bell K.S."/>
            <person name="Sebaihia M."/>
            <person name="Pritchard L."/>
            <person name="Holden M.T.G."/>
            <person name="Hyman L.J."/>
            <person name="Holeva M.C."/>
            <person name="Thomson N.R."/>
            <person name="Bentley S.D."/>
            <person name="Churcher L.J.C."/>
            <person name="Mungall K."/>
            <person name="Atkin R."/>
            <person name="Bason N."/>
            <person name="Brooks K."/>
            <person name="Chillingworth T."/>
            <person name="Clark K."/>
            <person name="Doggett J."/>
            <person name="Fraser A."/>
            <person name="Hance Z."/>
            <person name="Hauser H."/>
            <person name="Jagels K."/>
            <person name="Moule S."/>
            <person name="Norbertczak H."/>
            <person name="Ormond D."/>
            <person name="Price C."/>
            <person name="Quail M.A."/>
            <person name="Sanders M."/>
            <person name="Walker D."/>
            <person name="Whitehead S."/>
            <person name="Salmond G.P.C."/>
            <person name="Birch P.R.J."/>
            <person name="Parkhill J."/>
            <person name="Toth I.K."/>
        </authorList>
    </citation>
    <scope>NUCLEOTIDE SEQUENCE [LARGE SCALE GENOMIC DNA]</scope>
    <source>
        <strain>SCRI 1043 / ATCC BAA-672</strain>
    </source>
</reference>
<feature type="signal peptide" evidence="1">
    <location>
        <begin position="1"/>
        <end position="30"/>
    </location>
</feature>
<feature type="chain" id="PRO_0000042107" description="Secretion monitor">
    <location>
        <begin position="31"/>
        <end position="171"/>
    </location>
</feature>
<proteinExistence type="inferred from homology"/>
<organism>
    <name type="scientific">Pectobacterium atrosepticum (strain SCRI 1043 / ATCC BAA-672)</name>
    <name type="common">Erwinia carotovora subsp. atroseptica</name>
    <dbReference type="NCBI Taxonomy" id="218491"/>
    <lineage>
        <taxon>Bacteria</taxon>
        <taxon>Pseudomonadati</taxon>
        <taxon>Pseudomonadota</taxon>
        <taxon>Gammaproteobacteria</taxon>
        <taxon>Enterobacterales</taxon>
        <taxon>Pectobacteriaceae</taxon>
        <taxon>Pectobacterium</taxon>
    </lineage>
</organism>
<gene>
    <name evidence="1" type="primary">secM</name>
    <name type="ordered locus">ECA3807</name>
</gene>
<dbReference type="EMBL" id="BX950851">
    <property type="protein sequence ID" value="CAG76706.1"/>
    <property type="molecule type" value="Genomic_DNA"/>
</dbReference>
<dbReference type="RefSeq" id="WP_011095308.1">
    <property type="nucleotide sequence ID" value="NC_004547.2"/>
</dbReference>
<dbReference type="STRING" id="218491.ECA3807"/>
<dbReference type="GeneID" id="57210426"/>
<dbReference type="KEGG" id="eca:ECA3807"/>
<dbReference type="PATRIC" id="fig|218491.5.peg.3862"/>
<dbReference type="eggNOG" id="ENOG5031JGK">
    <property type="taxonomic scope" value="Bacteria"/>
</dbReference>
<dbReference type="HOGENOM" id="CLU_108853_0_0_6"/>
<dbReference type="OrthoDB" id="6495450at2"/>
<dbReference type="Proteomes" id="UP000007966">
    <property type="component" value="Chromosome"/>
</dbReference>
<dbReference type="GO" id="GO:0005829">
    <property type="term" value="C:cytosol"/>
    <property type="evidence" value="ECO:0007669"/>
    <property type="project" value="UniProtKB-SubCell"/>
</dbReference>
<dbReference type="GO" id="GO:0042597">
    <property type="term" value="C:periplasmic space"/>
    <property type="evidence" value="ECO:0007669"/>
    <property type="project" value="UniProtKB-SubCell"/>
</dbReference>
<dbReference type="GO" id="GO:0045182">
    <property type="term" value="F:translation regulator activity"/>
    <property type="evidence" value="ECO:0007669"/>
    <property type="project" value="InterPro"/>
</dbReference>
<dbReference type="HAMAP" id="MF_01332">
    <property type="entry name" value="SecM"/>
    <property type="match status" value="1"/>
</dbReference>
<dbReference type="InterPro" id="IPR009502">
    <property type="entry name" value="SecM"/>
</dbReference>
<dbReference type="NCBIfam" id="NF002799">
    <property type="entry name" value="PRK02943.1-1"/>
    <property type="match status" value="1"/>
</dbReference>
<dbReference type="Pfam" id="PF06558">
    <property type="entry name" value="SecM"/>
    <property type="match status" value="1"/>
</dbReference>
<dbReference type="PIRSF" id="PIRSF004572">
    <property type="entry name" value="SecM"/>
    <property type="match status" value="1"/>
</dbReference>
<accession>Q6D0J1</accession>
<keyword id="KW-0963">Cytoplasm</keyword>
<keyword id="KW-0574">Periplasm</keyword>
<keyword id="KW-1185">Reference proteome</keyword>
<keyword id="KW-0732">Signal</keyword>
<sequence>MIGILNRWRQFGRRYFWPHLLLGMVAASLGLPTSLNESQDIVSHPNSASSVSRQNSVSLSLTDLVALKEAHRRSSYSVDYWHQHAIRTVIRHLSFALTTPQTANAQQVDELQPHSLVLLDTLNALLTQDSQFPFVISPHAGRVTFYPQAHHQIGIWLAQIRGIRAGPYLLS</sequence>
<evidence type="ECO:0000255" key="1">
    <source>
        <dbReference type="HAMAP-Rule" id="MF_01332"/>
    </source>
</evidence>
<protein>
    <recommendedName>
        <fullName evidence="1">Secretion monitor</fullName>
    </recommendedName>
</protein>